<organism>
    <name type="scientific">Pseudomonas paraeruginosa (strain DSM 24068 / PA7)</name>
    <name type="common">Pseudomonas aeruginosa (strain PA7)</name>
    <dbReference type="NCBI Taxonomy" id="381754"/>
    <lineage>
        <taxon>Bacteria</taxon>
        <taxon>Pseudomonadati</taxon>
        <taxon>Pseudomonadota</taxon>
        <taxon>Gammaproteobacteria</taxon>
        <taxon>Pseudomonadales</taxon>
        <taxon>Pseudomonadaceae</taxon>
        <taxon>Pseudomonas</taxon>
        <taxon>Pseudomonas paraeruginosa</taxon>
    </lineage>
</organism>
<feature type="chain" id="PRO_1000025177" description="Glutamate--cysteine ligase">
    <location>
        <begin position="1"/>
        <end position="527"/>
    </location>
</feature>
<proteinExistence type="inferred from homology"/>
<evidence type="ECO:0000255" key="1">
    <source>
        <dbReference type="HAMAP-Rule" id="MF_00578"/>
    </source>
</evidence>
<name>GSH1_PSEP7</name>
<dbReference type="EC" id="6.3.2.2" evidence="1"/>
<dbReference type="EMBL" id="CP000744">
    <property type="protein sequence ID" value="ABR82588.1"/>
    <property type="molecule type" value="Genomic_DNA"/>
</dbReference>
<dbReference type="RefSeq" id="WP_012077830.1">
    <property type="nucleotide sequence ID" value="NC_009656.1"/>
</dbReference>
<dbReference type="SMR" id="A6VDX9"/>
<dbReference type="GeneID" id="77223736"/>
<dbReference type="KEGG" id="pap:PSPA7_5948"/>
<dbReference type="HOGENOM" id="CLU_020728_3_0_6"/>
<dbReference type="UniPathway" id="UPA00142">
    <property type="reaction ID" value="UER00209"/>
</dbReference>
<dbReference type="Proteomes" id="UP000001582">
    <property type="component" value="Chromosome"/>
</dbReference>
<dbReference type="GO" id="GO:0005829">
    <property type="term" value="C:cytosol"/>
    <property type="evidence" value="ECO:0007669"/>
    <property type="project" value="TreeGrafter"/>
</dbReference>
<dbReference type="GO" id="GO:0005524">
    <property type="term" value="F:ATP binding"/>
    <property type="evidence" value="ECO:0007669"/>
    <property type="project" value="UniProtKB-KW"/>
</dbReference>
<dbReference type="GO" id="GO:0004357">
    <property type="term" value="F:glutamate-cysteine ligase activity"/>
    <property type="evidence" value="ECO:0007669"/>
    <property type="project" value="UniProtKB-UniRule"/>
</dbReference>
<dbReference type="GO" id="GO:0046872">
    <property type="term" value="F:metal ion binding"/>
    <property type="evidence" value="ECO:0007669"/>
    <property type="project" value="TreeGrafter"/>
</dbReference>
<dbReference type="GO" id="GO:0006750">
    <property type="term" value="P:glutathione biosynthetic process"/>
    <property type="evidence" value="ECO:0007669"/>
    <property type="project" value="UniProtKB-UniRule"/>
</dbReference>
<dbReference type="Gene3D" id="3.30.590.20">
    <property type="match status" value="1"/>
</dbReference>
<dbReference type="HAMAP" id="MF_00578">
    <property type="entry name" value="Glu_cys_ligase"/>
    <property type="match status" value="1"/>
</dbReference>
<dbReference type="InterPro" id="IPR014746">
    <property type="entry name" value="Gln_synth/guanido_kin_cat_dom"/>
</dbReference>
<dbReference type="InterPro" id="IPR007370">
    <property type="entry name" value="Glu_cys_ligase"/>
</dbReference>
<dbReference type="InterPro" id="IPR006334">
    <property type="entry name" value="Glut_cys_ligase"/>
</dbReference>
<dbReference type="NCBIfam" id="TIGR01434">
    <property type="entry name" value="glu_cys_ligase"/>
    <property type="match status" value="1"/>
</dbReference>
<dbReference type="PANTHER" id="PTHR38761">
    <property type="entry name" value="GLUTAMATE--CYSTEINE LIGASE"/>
    <property type="match status" value="1"/>
</dbReference>
<dbReference type="PANTHER" id="PTHR38761:SF1">
    <property type="entry name" value="GLUTAMATE--CYSTEINE LIGASE"/>
    <property type="match status" value="1"/>
</dbReference>
<dbReference type="Pfam" id="PF04262">
    <property type="entry name" value="Glu_cys_ligase"/>
    <property type="match status" value="1"/>
</dbReference>
<dbReference type="SUPFAM" id="SSF55931">
    <property type="entry name" value="Glutamine synthetase/guanido kinase"/>
    <property type="match status" value="1"/>
</dbReference>
<keyword id="KW-0067">ATP-binding</keyword>
<keyword id="KW-0317">Glutathione biosynthesis</keyword>
<keyword id="KW-0436">Ligase</keyword>
<keyword id="KW-0547">Nucleotide-binding</keyword>
<gene>
    <name evidence="1" type="primary">gshA</name>
    <name type="ordered locus">PSPA7_5948</name>
</gene>
<comment type="catalytic activity">
    <reaction evidence="1">
        <text>L-cysteine + L-glutamate + ATP = gamma-L-glutamyl-L-cysteine + ADP + phosphate + H(+)</text>
        <dbReference type="Rhea" id="RHEA:13285"/>
        <dbReference type="ChEBI" id="CHEBI:15378"/>
        <dbReference type="ChEBI" id="CHEBI:29985"/>
        <dbReference type="ChEBI" id="CHEBI:30616"/>
        <dbReference type="ChEBI" id="CHEBI:35235"/>
        <dbReference type="ChEBI" id="CHEBI:43474"/>
        <dbReference type="ChEBI" id="CHEBI:58173"/>
        <dbReference type="ChEBI" id="CHEBI:456216"/>
        <dbReference type="EC" id="6.3.2.2"/>
    </reaction>
</comment>
<comment type="pathway">
    <text evidence="1">Sulfur metabolism; glutathione biosynthesis; glutathione from L-cysteine and L-glutamate: step 1/2.</text>
</comment>
<comment type="similarity">
    <text evidence="1">Belongs to the glutamate--cysteine ligase type 1 family. Type 1 subfamily.</text>
</comment>
<sequence>MSDLLSRRLALLGAAANLPLLTECLHGIERECLRVDSDGKLALTPHPRALGSTLTHPQITTDYSEALLEFITPTETDVADTLGDLERIHRFASSQLDGEYLWSPSMPCELPDEESIPIARYGNSMIGRLKYVYRKGLALRYGKTMQCIAGIHYNFSLPEKLWPLLRQAEGSELAERDYQSAAYIALIRNFRRYSWLLMYLFGASPALDAGFLRGRPSQLERFDEHTLYLPYATSLRMSDLGYQNNAQAGLTPCYNDLQSYIDSLRKAVSTPYPAYEKIGTKQDGEWVQLNTNVLQIENEYYSSIRPKRVTYTGERPVQALAARGVQYVEVRCLDINPFLPLGIDLDEARFLDAFLLFCAFSDSPLLNGECSDATDNFLAVVKEGRRPGLQLRRRGQPVELKDWASELLERIADTAALLDRARGGEAHAAALAAQRAKVADPELTPSAQVLKVMRERGESFEAFSLRQSREHAEYFRQHPLAADEQARFEQMASASLAEQAELERDQDGDFDTFVAAYQASILGLISN</sequence>
<accession>A6VDX9</accession>
<protein>
    <recommendedName>
        <fullName evidence="1">Glutamate--cysteine ligase</fullName>
        <ecNumber evidence="1">6.3.2.2</ecNumber>
    </recommendedName>
    <alternativeName>
        <fullName evidence="1">Gamma-ECS</fullName>
        <shortName evidence="1">GCS</shortName>
    </alternativeName>
    <alternativeName>
        <fullName evidence="1">Gamma-glutamylcysteine synthetase</fullName>
    </alternativeName>
</protein>
<reference key="1">
    <citation type="submission" date="2007-06" db="EMBL/GenBank/DDBJ databases">
        <authorList>
            <person name="Dodson R.J."/>
            <person name="Harkins D."/>
            <person name="Paulsen I.T."/>
        </authorList>
    </citation>
    <scope>NUCLEOTIDE SEQUENCE [LARGE SCALE GENOMIC DNA]</scope>
    <source>
        <strain>DSM 24068 / PA7</strain>
    </source>
</reference>